<protein>
    <recommendedName>
        <fullName evidence="1">Ureidoacrylate amidohydrolase RutB</fullName>
        <ecNumber evidence="1">3.5.1.110</ecNumber>
    </recommendedName>
</protein>
<name>RUTB_ECOSE</name>
<feature type="chain" id="PRO_0000402664" description="Ureidoacrylate amidohydrolase RutB">
    <location>
        <begin position="1"/>
        <end position="230"/>
    </location>
</feature>
<feature type="active site" description="Proton acceptor" evidence="1">
    <location>
        <position position="24"/>
    </location>
</feature>
<feature type="active site" evidence="1">
    <location>
        <position position="133"/>
    </location>
</feature>
<feature type="active site" description="Nucleophile" evidence="1">
    <location>
        <position position="166"/>
    </location>
</feature>
<keyword id="KW-0378">Hydrolase</keyword>
<evidence type="ECO:0000255" key="1">
    <source>
        <dbReference type="HAMAP-Rule" id="MF_00830"/>
    </source>
</evidence>
<proteinExistence type="inferred from homology"/>
<dbReference type="EC" id="3.5.1.110" evidence="1"/>
<dbReference type="EMBL" id="AP009240">
    <property type="protein sequence ID" value="BAG76597.1"/>
    <property type="molecule type" value="Genomic_DNA"/>
</dbReference>
<dbReference type="RefSeq" id="WP_001387701.1">
    <property type="nucleotide sequence ID" value="NC_011415.1"/>
</dbReference>
<dbReference type="SMR" id="B6I987"/>
<dbReference type="KEGG" id="ecy:ECSE_1073"/>
<dbReference type="HOGENOM" id="CLU_068979_8_0_6"/>
<dbReference type="Proteomes" id="UP000008199">
    <property type="component" value="Chromosome"/>
</dbReference>
<dbReference type="GO" id="GO:0016811">
    <property type="term" value="F:hydrolase activity, acting on carbon-nitrogen (but not peptide) bonds, in linear amides"/>
    <property type="evidence" value="ECO:0007669"/>
    <property type="project" value="UniProtKB-UniRule"/>
</dbReference>
<dbReference type="GO" id="GO:0019740">
    <property type="term" value="P:nitrogen utilization"/>
    <property type="evidence" value="ECO:0007669"/>
    <property type="project" value="UniProtKB-UniRule"/>
</dbReference>
<dbReference type="GO" id="GO:0006212">
    <property type="term" value="P:uracil catabolic process"/>
    <property type="evidence" value="ECO:0007669"/>
    <property type="project" value="UniProtKB-UniRule"/>
</dbReference>
<dbReference type="CDD" id="cd00431">
    <property type="entry name" value="cysteine_hydrolases"/>
    <property type="match status" value="1"/>
</dbReference>
<dbReference type="FunFam" id="3.40.50.850:FF:000004">
    <property type="entry name" value="Peroxyureidoacrylate/ureidoacrylate amidohydrolase RutB"/>
    <property type="match status" value="1"/>
</dbReference>
<dbReference type="Gene3D" id="3.40.50.850">
    <property type="entry name" value="Isochorismatase-like"/>
    <property type="match status" value="1"/>
</dbReference>
<dbReference type="HAMAP" id="MF_00830">
    <property type="entry name" value="RutB"/>
    <property type="match status" value="1"/>
</dbReference>
<dbReference type="InterPro" id="IPR000868">
    <property type="entry name" value="Isochorismatase-like_dom"/>
</dbReference>
<dbReference type="InterPro" id="IPR050272">
    <property type="entry name" value="Isochorismatase-like_hydrls"/>
</dbReference>
<dbReference type="InterPro" id="IPR036380">
    <property type="entry name" value="Isochorismatase-like_sf"/>
</dbReference>
<dbReference type="InterPro" id="IPR019916">
    <property type="entry name" value="RutB"/>
</dbReference>
<dbReference type="NCBIfam" id="TIGR03614">
    <property type="entry name" value="RutB"/>
    <property type="match status" value="1"/>
</dbReference>
<dbReference type="PANTHER" id="PTHR43540:SF6">
    <property type="entry name" value="ISOCHORISMATASE-LIKE DOMAIN-CONTAINING PROTEIN"/>
    <property type="match status" value="1"/>
</dbReference>
<dbReference type="PANTHER" id="PTHR43540">
    <property type="entry name" value="PEROXYUREIDOACRYLATE/UREIDOACRYLATE AMIDOHYDROLASE-RELATED"/>
    <property type="match status" value="1"/>
</dbReference>
<dbReference type="Pfam" id="PF00857">
    <property type="entry name" value="Isochorismatase"/>
    <property type="match status" value="1"/>
</dbReference>
<dbReference type="SUPFAM" id="SSF52499">
    <property type="entry name" value="Isochorismatase-like hydrolases"/>
    <property type="match status" value="1"/>
</dbReference>
<comment type="function">
    <text evidence="1">Hydrolyzes ureidoacrylate to form aminoacrylate and carbamate. The carbamate hydrolyzes spontaneously, thereby releasing one of the nitrogen atoms of the pyrimidine ring as ammonia and one of its carbon atoms as CO2.</text>
</comment>
<comment type="catalytic activity">
    <reaction evidence="1">
        <text>(Z)-3-ureidoacrylate + H2O + H(+) = (Z)-3-aminoacrylate + NH4(+) + CO2</text>
        <dbReference type="Rhea" id="RHEA:42624"/>
        <dbReference type="ChEBI" id="CHEBI:15377"/>
        <dbReference type="ChEBI" id="CHEBI:15378"/>
        <dbReference type="ChEBI" id="CHEBI:16526"/>
        <dbReference type="ChEBI" id="CHEBI:28938"/>
        <dbReference type="ChEBI" id="CHEBI:59891"/>
        <dbReference type="ChEBI" id="CHEBI:59894"/>
        <dbReference type="EC" id="3.5.1.110"/>
    </reaction>
</comment>
<comment type="catalytic activity">
    <reaction evidence="1">
        <text>(Z)-3-ureidoacrylate + H2O = (Z)-3-aminoacrylate + carbamate + H(+)</text>
        <dbReference type="Rhea" id="RHEA:31603"/>
        <dbReference type="ChEBI" id="CHEBI:13941"/>
        <dbReference type="ChEBI" id="CHEBI:15377"/>
        <dbReference type="ChEBI" id="CHEBI:15378"/>
        <dbReference type="ChEBI" id="CHEBI:59891"/>
        <dbReference type="ChEBI" id="CHEBI:59894"/>
    </reaction>
</comment>
<comment type="catalytic activity">
    <reaction evidence="1">
        <text>(Z)-2-methylureidoacrylate + H2O + H(+) = (Z)-2-methylaminoacrylate + NH4(+) + CO2</text>
        <dbReference type="Rhea" id="RHEA:42620"/>
        <dbReference type="ChEBI" id="CHEBI:15377"/>
        <dbReference type="ChEBI" id="CHEBI:15378"/>
        <dbReference type="ChEBI" id="CHEBI:16526"/>
        <dbReference type="ChEBI" id="CHEBI:28938"/>
        <dbReference type="ChEBI" id="CHEBI:143783"/>
        <dbReference type="ChEBI" id="CHEBI:145735"/>
        <dbReference type="EC" id="3.5.1.110"/>
    </reaction>
</comment>
<comment type="induction">
    <text evidence="1">Up-regulated by the nitrogen regulatory protein C (NtrC also called GlnG) and repressed by RutR.</text>
</comment>
<comment type="similarity">
    <text evidence="1">Belongs to the isochorismatase family. RutB subfamily.</text>
</comment>
<organism>
    <name type="scientific">Escherichia coli (strain SE11)</name>
    <dbReference type="NCBI Taxonomy" id="409438"/>
    <lineage>
        <taxon>Bacteria</taxon>
        <taxon>Pseudomonadati</taxon>
        <taxon>Pseudomonadota</taxon>
        <taxon>Gammaproteobacteria</taxon>
        <taxon>Enterobacterales</taxon>
        <taxon>Enterobacteriaceae</taxon>
        <taxon>Escherichia</taxon>
    </lineage>
</organism>
<accession>B6I987</accession>
<gene>
    <name evidence="1" type="primary">rutB</name>
    <name type="ordered locus">ECSE_1073</name>
</gene>
<sequence>MTTLTARPEAITFDPQQSALIVVDMQNAYATPGGYLDLAGFDVSTTRPVIANIQTAVTAARAAGMLIIWFQNGWDEQYVEAGGPGSPNFHKSNALKTMRNQPQLQGKLLAKGSWDYQLVDELVPQPGDIVLPKPRYSGFFNTPLDSILRSRGIRHLVFTGIATNVCVESTLRDGFFLEYFGVVLEDATHQAGPEFAQKAALFNIETFFGWVSDVETFCDALSPTSFARIA</sequence>
<reference key="1">
    <citation type="journal article" date="2008" name="DNA Res.">
        <title>Complete genome sequence and comparative analysis of the wild-type commensal Escherichia coli strain SE11 isolated from a healthy adult.</title>
        <authorList>
            <person name="Oshima K."/>
            <person name="Toh H."/>
            <person name="Ogura Y."/>
            <person name="Sasamoto H."/>
            <person name="Morita H."/>
            <person name="Park S.-H."/>
            <person name="Ooka T."/>
            <person name="Iyoda S."/>
            <person name="Taylor T.D."/>
            <person name="Hayashi T."/>
            <person name="Itoh K."/>
            <person name="Hattori M."/>
        </authorList>
    </citation>
    <scope>NUCLEOTIDE SEQUENCE [LARGE SCALE GENOMIC DNA]</scope>
    <source>
        <strain>SE11</strain>
    </source>
</reference>